<gene>
    <name evidence="1" type="primary">mraY</name>
    <name type="ordered locus">Acid345_3632</name>
</gene>
<feature type="chain" id="PRO_1000002927" description="Phospho-N-acetylmuramoyl-pentapeptide-transferase">
    <location>
        <begin position="1"/>
        <end position="379"/>
    </location>
</feature>
<feature type="transmembrane region" description="Helical" evidence="1">
    <location>
        <begin position="27"/>
        <end position="47"/>
    </location>
</feature>
<feature type="transmembrane region" description="Helical" evidence="1">
    <location>
        <begin position="76"/>
        <end position="96"/>
    </location>
</feature>
<feature type="transmembrane region" description="Helical" evidence="1">
    <location>
        <begin position="100"/>
        <end position="120"/>
    </location>
</feature>
<feature type="transmembrane region" description="Helical" evidence="1">
    <location>
        <begin position="135"/>
        <end position="155"/>
    </location>
</feature>
<feature type="transmembrane region" description="Helical" evidence="1">
    <location>
        <begin position="185"/>
        <end position="205"/>
    </location>
</feature>
<feature type="transmembrane region" description="Helical" evidence="1">
    <location>
        <begin position="218"/>
        <end position="238"/>
    </location>
</feature>
<feature type="transmembrane region" description="Helical" evidence="1">
    <location>
        <begin position="255"/>
        <end position="275"/>
    </location>
</feature>
<feature type="transmembrane region" description="Helical" evidence="1">
    <location>
        <begin position="283"/>
        <end position="303"/>
    </location>
</feature>
<feature type="transmembrane region" description="Helical" evidence="1">
    <location>
        <begin position="307"/>
        <end position="327"/>
    </location>
</feature>
<feature type="transmembrane region" description="Helical" evidence="1">
    <location>
        <begin position="356"/>
        <end position="376"/>
    </location>
</feature>
<name>MRAY_KORVE</name>
<reference key="1">
    <citation type="journal article" date="2009" name="Appl. Environ. Microbiol.">
        <title>Three genomes from the phylum Acidobacteria provide insight into the lifestyles of these microorganisms in soils.</title>
        <authorList>
            <person name="Ward N.L."/>
            <person name="Challacombe J.F."/>
            <person name="Janssen P.H."/>
            <person name="Henrissat B."/>
            <person name="Coutinho P.M."/>
            <person name="Wu M."/>
            <person name="Xie G."/>
            <person name="Haft D.H."/>
            <person name="Sait M."/>
            <person name="Badger J."/>
            <person name="Barabote R.D."/>
            <person name="Bradley B."/>
            <person name="Brettin T.S."/>
            <person name="Brinkac L.M."/>
            <person name="Bruce D."/>
            <person name="Creasy T."/>
            <person name="Daugherty S.C."/>
            <person name="Davidsen T.M."/>
            <person name="DeBoy R.T."/>
            <person name="Detter J.C."/>
            <person name="Dodson R.J."/>
            <person name="Durkin A.S."/>
            <person name="Ganapathy A."/>
            <person name="Gwinn-Giglio M."/>
            <person name="Han C.S."/>
            <person name="Khouri H."/>
            <person name="Kiss H."/>
            <person name="Kothari S.P."/>
            <person name="Madupu R."/>
            <person name="Nelson K.E."/>
            <person name="Nelson W.C."/>
            <person name="Paulsen I."/>
            <person name="Penn K."/>
            <person name="Ren Q."/>
            <person name="Rosovitz M.J."/>
            <person name="Selengut J.D."/>
            <person name="Shrivastava S."/>
            <person name="Sullivan S.A."/>
            <person name="Tapia R."/>
            <person name="Thompson L.S."/>
            <person name="Watkins K.L."/>
            <person name="Yang Q."/>
            <person name="Yu C."/>
            <person name="Zafar N."/>
            <person name="Zhou L."/>
            <person name="Kuske C.R."/>
        </authorList>
    </citation>
    <scope>NUCLEOTIDE SEQUENCE [LARGE SCALE GENOMIC DNA]</scope>
    <source>
        <strain>Ellin345</strain>
    </source>
</reference>
<organism>
    <name type="scientific">Koribacter versatilis (strain Ellin345)</name>
    <dbReference type="NCBI Taxonomy" id="204669"/>
    <lineage>
        <taxon>Bacteria</taxon>
        <taxon>Pseudomonadati</taxon>
        <taxon>Acidobacteriota</taxon>
        <taxon>Terriglobia</taxon>
        <taxon>Terriglobales</taxon>
        <taxon>Candidatus Korobacteraceae</taxon>
        <taxon>Candidatus Korobacter</taxon>
    </lineage>
</organism>
<protein>
    <recommendedName>
        <fullName evidence="1">Phospho-N-acetylmuramoyl-pentapeptide-transferase</fullName>
        <ecNumber evidence="1">2.7.8.13</ecNumber>
    </recommendedName>
    <alternativeName>
        <fullName evidence="1">UDP-MurNAc-pentapeptide phosphotransferase</fullName>
    </alternativeName>
</protein>
<comment type="function">
    <text evidence="1">Catalyzes the initial step of the lipid cycle reactions in the biosynthesis of the cell wall peptidoglycan: transfers peptidoglycan precursor phospho-MurNAc-pentapeptide from UDP-MurNAc-pentapeptide onto the lipid carrier undecaprenyl phosphate, yielding undecaprenyl-pyrophosphoryl-MurNAc-pentapeptide, known as lipid I.</text>
</comment>
<comment type="catalytic activity">
    <reaction evidence="1">
        <text>UDP-N-acetyl-alpha-D-muramoyl-L-alanyl-gamma-D-glutamyl-meso-2,6-diaminopimeloyl-D-alanyl-D-alanine + di-trans,octa-cis-undecaprenyl phosphate = di-trans,octa-cis-undecaprenyl diphospho-N-acetyl-alpha-D-muramoyl-L-alanyl-D-glutamyl-meso-2,6-diaminopimeloyl-D-alanyl-D-alanine + UMP</text>
        <dbReference type="Rhea" id="RHEA:28386"/>
        <dbReference type="ChEBI" id="CHEBI:57865"/>
        <dbReference type="ChEBI" id="CHEBI:60392"/>
        <dbReference type="ChEBI" id="CHEBI:61386"/>
        <dbReference type="ChEBI" id="CHEBI:61387"/>
        <dbReference type="EC" id="2.7.8.13"/>
    </reaction>
</comment>
<comment type="cofactor">
    <cofactor evidence="1">
        <name>Mg(2+)</name>
        <dbReference type="ChEBI" id="CHEBI:18420"/>
    </cofactor>
</comment>
<comment type="pathway">
    <text evidence="1">Cell wall biogenesis; peptidoglycan biosynthesis.</text>
</comment>
<comment type="subcellular location">
    <subcellularLocation>
        <location evidence="1">Cell inner membrane</location>
        <topology evidence="1">Multi-pass membrane protein</topology>
    </subcellularLocation>
</comment>
<comment type="similarity">
    <text evidence="1">Belongs to the glycosyltransferase 4 family. MraY subfamily.</text>
</comment>
<evidence type="ECO:0000255" key="1">
    <source>
        <dbReference type="HAMAP-Rule" id="MF_00038"/>
    </source>
</evidence>
<dbReference type="EC" id="2.7.8.13" evidence="1"/>
<dbReference type="EMBL" id="CP000360">
    <property type="protein sequence ID" value="ABF42633.1"/>
    <property type="molecule type" value="Genomic_DNA"/>
</dbReference>
<dbReference type="RefSeq" id="WP_011524432.1">
    <property type="nucleotide sequence ID" value="NC_008009.1"/>
</dbReference>
<dbReference type="SMR" id="Q1IKG7"/>
<dbReference type="STRING" id="204669.Acid345_3632"/>
<dbReference type="EnsemblBacteria" id="ABF42633">
    <property type="protein sequence ID" value="ABF42633"/>
    <property type="gene ID" value="Acid345_3632"/>
</dbReference>
<dbReference type="KEGG" id="aba:Acid345_3632"/>
<dbReference type="eggNOG" id="COG0472">
    <property type="taxonomic scope" value="Bacteria"/>
</dbReference>
<dbReference type="HOGENOM" id="CLU_023982_0_0_0"/>
<dbReference type="OrthoDB" id="9805475at2"/>
<dbReference type="UniPathway" id="UPA00219"/>
<dbReference type="Proteomes" id="UP000002432">
    <property type="component" value="Chromosome"/>
</dbReference>
<dbReference type="GO" id="GO:0005886">
    <property type="term" value="C:plasma membrane"/>
    <property type="evidence" value="ECO:0007669"/>
    <property type="project" value="UniProtKB-SubCell"/>
</dbReference>
<dbReference type="GO" id="GO:0046872">
    <property type="term" value="F:metal ion binding"/>
    <property type="evidence" value="ECO:0007669"/>
    <property type="project" value="UniProtKB-KW"/>
</dbReference>
<dbReference type="GO" id="GO:0008963">
    <property type="term" value="F:phospho-N-acetylmuramoyl-pentapeptide-transferase activity"/>
    <property type="evidence" value="ECO:0007669"/>
    <property type="project" value="UniProtKB-UniRule"/>
</dbReference>
<dbReference type="GO" id="GO:0051992">
    <property type="term" value="F:UDP-N-acetylmuramoyl-L-alanyl-D-glutamyl-meso-2,6-diaminopimelyl-D-alanyl-D-alanine:undecaprenyl-phosphate transferase activity"/>
    <property type="evidence" value="ECO:0007669"/>
    <property type="project" value="RHEA"/>
</dbReference>
<dbReference type="GO" id="GO:0051301">
    <property type="term" value="P:cell division"/>
    <property type="evidence" value="ECO:0007669"/>
    <property type="project" value="UniProtKB-KW"/>
</dbReference>
<dbReference type="GO" id="GO:0071555">
    <property type="term" value="P:cell wall organization"/>
    <property type="evidence" value="ECO:0007669"/>
    <property type="project" value="UniProtKB-KW"/>
</dbReference>
<dbReference type="GO" id="GO:0009252">
    <property type="term" value="P:peptidoglycan biosynthetic process"/>
    <property type="evidence" value="ECO:0007669"/>
    <property type="project" value="UniProtKB-UniRule"/>
</dbReference>
<dbReference type="GO" id="GO:0008360">
    <property type="term" value="P:regulation of cell shape"/>
    <property type="evidence" value="ECO:0007669"/>
    <property type="project" value="UniProtKB-KW"/>
</dbReference>
<dbReference type="CDD" id="cd06852">
    <property type="entry name" value="GT_MraY"/>
    <property type="match status" value="1"/>
</dbReference>
<dbReference type="HAMAP" id="MF_00038">
    <property type="entry name" value="MraY"/>
    <property type="match status" value="1"/>
</dbReference>
<dbReference type="InterPro" id="IPR000715">
    <property type="entry name" value="Glycosyl_transferase_4"/>
</dbReference>
<dbReference type="InterPro" id="IPR003524">
    <property type="entry name" value="PNAcMuramoyl-5peptid_Trfase"/>
</dbReference>
<dbReference type="InterPro" id="IPR018480">
    <property type="entry name" value="PNAcMuramoyl-5peptid_Trfase_CS"/>
</dbReference>
<dbReference type="NCBIfam" id="TIGR00445">
    <property type="entry name" value="mraY"/>
    <property type="match status" value="1"/>
</dbReference>
<dbReference type="PANTHER" id="PTHR22926">
    <property type="entry name" value="PHOSPHO-N-ACETYLMURAMOYL-PENTAPEPTIDE-TRANSFERASE"/>
    <property type="match status" value="1"/>
</dbReference>
<dbReference type="PANTHER" id="PTHR22926:SF5">
    <property type="entry name" value="PHOSPHO-N-ACETYLMURAMOYL-PENTAPEPTIDE-TRANSFERASE HOMOLOG"/>
    <property type="match status" value="1"/>
</dbReference>
<dbReference type="Pfam" id="PF00953">
    <property type="entry name" value="Glycos_transf_4"/>
    <property type="match status" value="1"/>
</dbReference>
<dbReference type="Pfam" id="PF10555">
    <property type="entry name" value="MraY_sig1"/>
    <property type="match status" value="1"/>
</dbReference>
<dbReference type="PROSITE" id="PS01348">
    <property type="entry name" value="MRAY_2"/>
    <property type="match status" value="1"/>
</dbReference>
<sequence>MLYWLLYEKAFLLHNFTPFRIFRYLTFRTAFASLTALFMGLIIGPAVVRRLREFQIGQYIREEGPKSHQKKSGTPTMGGVLITIAIIVPTLLWADLSNKFVWIAMLATIAFGAIGFTDDYLKVANRRNLGLTARAKMGLQILVAILVAISLVLVQRHGHYNTHLIVPFIKSFHPDLEISKLATYPHIWIIAYIPFLAFVAIVLVGSSNAVNLTDGLDGLAIGCTVIAAGALTVLTYVSGHAQFADYLGLSRMPEVGELSIFCGAMVGSAIGFLWYNAHPAEVFMGDVGSLALGGAIGTVAVIIKQELLLPFIGGVFVLEALSVILQVGSYKLRKKRIFKMAPLHHHFELLGWSESKIIVRFWIASLVFALFALTTLKLR</sequence>
<proteinExistence type="inferred from homology"/>
<accession>Q1IKG7</accession>
<keyword id="KW-0131">Cell cycle</keyword>
<keyword id="KW-0132">Cell division</keyword>
<keyword id="KW-0997">Cell inner membrane</keyword>
<keyword id="KW-1003">Cell membrane</keyword>
<keyword id="KW-0133">Cell shape</keyword>
<keyword id="KW-0961">Cell wall biogenesis/degradation</keyword>
<keyword id="KW-0460">Magnesium</keyword>
<keyword id="KW-0472">Membrane</keyword>
<keyword id="KW-0479">Metal-binding</keyword>
<keyword id="KW-0573">Peptidoglycan synthesis</keyword>
<keyword id="KW-1185">Reference proteome</keyword>
<keyword id="KW-0808">Transferase</keyword>
<keyword id="KW-0812">Transmembrane</keyword>
<keyword id="KW-1133">Transmembrane helix</keyword>